<accession>O16361</accession>
<comment type="function">
    <text>Orphan nuclear receptor.</text>
</comment>
<comment type="subcellular location">
    <subcellularLocation>
        <location evidence="1">Nucleus</location>
    </subcellularLocation>
</comment>
<comment type="similarity">
    <text evidence="3">Belongs to the nuclear hormone receptor family.</text>
</comment>
<gene>
    <name type="primary">nhr-134</name>
    <name type="ORF">F44C8.2</name>
</gene>
<feature type="chain" id="PRO_0000223595" description="Nuclear hormone receptor family member nhr-134">
    <location>
        <begin position="1"/>
        <end position="407"/>
    </location>
</feature>
<feature type="domain" description="NR LBD" evidence="2">
    <location>
        <begin position="157"/>
        <end position="407"/>
    </location>
</feature>
<feature type="zinc finger region" description="NR C4-type" evidence="1">
    <location>
        <begin position="11"/>
        <end position="31"/>
    </location>
</feature>
<feature type="zinc finger region" description="NR C4-type; degenerate" evidence="1">
    <location>
        <begin position="47"/>
        <end position="66"/>
    </location>
</feature>
<protein>
    <recommendedName>
        <fullName>Nuclear hormone receptor family member nhr-134</fullName>
    </recommendedName>
</protein>
<sequence length="407" mass="47144">MPAPLFLSGPCEICGQKTSGRHFGVMSCRSCAAFFRRAATCSRIFGRCPNGNCKLLENGKFKCKKCRMKRCLEVGMDETKFQCNRDLISSSNKFQKRVSLIEPPPQSLSTFLGRPTLLLCCEPTRASHIKTLINVTYMVDVARDILKRDVSTKIPYQFHNSLERLALSLEEIRSREPDEKIKMLRKIGQEESLLIWEQAFLRAVEWFSNFSEFNALDELSKMTILKSAWISWTRLEKLAETADHQRKKIFGDSVMMCGNDACLDLANYEVDLTWCTNYTTEQLLFYLSPEIEQNHFLSLQELVELNPTSTELSYMLLQITLHLAGKKAQGQLLEITEMLLEAQGNHLHEYYVKKLKMPNYVMRLAKLMKINRRIESDMRDRVEKNHIARIFNILKVEFSEPDMFEST</sequence>
<organism>
    <name type="scientific">Caenorhabditis elegans</name>
    <dbReference type="NCBI Taxonomy" id="6239"/>
    <lineage>
        <taxon>Eukaryota</taxon>
        <taxon>Metazoa</taxon>
        <taxon>Ecdysozoa</taxon>
        <taxon>Nematoda</taxon>
        <taxon>Chromadorea</taxon>
        <taxon>Rhabditida</taxon>
        <taxon>Rhabditina</taxon>
        <taxon>Rhabditomorpha</taxon>
        <taxon>Rhabditoidea</taxon>
        <taxon>Rhabditidae</taxon>
        <taxon>Peloderinae</taxon>
        <taxon>Caenorhabditis</taxon>
    </lineage>
</organism>
<dbReference type="EMBL" id="FO081357">
    <property type="protein sequence ID" value="CCD71002.1"/>
    <property type="molecule type" value="Genomic_DNA"/>
</dbReference>
<dbReference type="RefSeq" id="NP_503610.1">
    <property type="nucleotide sequence ID" value="NM_071209.7"/>
</dbReference>
<dbReference type="SMR" id="O16361"/>
<dbReference type="FunCoup" id="O16361">
    <property type="interactions" value="274"/>
</dbReference>
<dbReference type="PaxDb" id="6239-F44C8.2.2"/>
<dbReference type="PeptideAtlas" id="O16361"/>
<dbReference type="EnsemblMetazoa" id="F44C8.2.1">
    <property type="protein sequence ID" value="F44C8.2.1"/>
    <property type="gene ID" value="WBGene00003724"/>
</dbReference>
<dbReference type="GeneID" id="185728"/>
<dbReference type="KEGG" id="cel:CELE_F44C8.2"/>
<dbReference type="UCSC" id="F44C8.2.1">
    <property type="organism name" value="c. elegans"/>
</dbReference>
<dbReference type="AGR" id="WB:WBGene00003724"/>
<dbReference type="CTD" id="185728"/>
<dbReference type="WormBase" id="F44C8.2">
    <property type="protein sequence ID" value="CE17823"/>
    <property type="gene ID" value="WBGene00003724"/>
    <property type="gene designation" value="nhr-134"/>
</dbReference>
<dbReference type="eggNOG" id="KOG3575">
    <property type="taxonomic scope" value="Eukaryota"/>
</dbReference>
<dbReference type="GeneTree" id="ENSGT00970000195928"/>
<dbReference type="HOGENOM" id="CLU_007368_7_1_1"/>
<dbReference type="InParanoid" id="O16361"/>
<dbReference type="OMA" id="WICWTRL"/>
<dbReference type="OrthoDB" id="5855160at2759"/>
<dbReference type="PhylomeDB" id="O16361"/>
<dbReference type="PRO" id="PR:O16361"/>
<dbReference type="Proteomes" id="UP000001940">
    <property type="component" value="Chromosome V"/>
</dbReference>
<dbReference type="Bgee" id="WBGene00003724">
    <property type="expression patterns" value="Expressed in pharyngeal muscle cell (C elegans) and 3 other cell types or tissues"/>
</dbReference>
<dbReference type="GO" id="GO:0005634">
    <property type="term" value="C:nucleus"/>
    <property type="evidence" value="ECO:0007669"/>
    <property type="project" value="UniProtKB-SubCell"/>
</dbReference>
<dbReference type="GO" id="GO:0003700">
    <property type="term" value="F:DNA-binding transcription factor activity"/>
    <property type="evidence" value="ECO:0007669"/>
    <property type="project" value="InterPro"/>
</dbReference>
<dbReference type="GO" id="GO:0000978">
    <property type="term" value="F:RNA polymerase II cis-regulatory region sequence-specific DNA binding"/>
    <property type="evidence" value="ECO:0007669"/>
    <property type="project" value="InterPro"/>
</dbReference>
<dbReference type="GO" id="GO:0008270">
    <property type="term" value="F:zinc ion binding"/>
    <property type="evidence" value="ECO:0007669"/>
    <property type="project" value="UniProtKB-KW"/>
</dbReference>
<dbReference type="CDD" id="cd06960">
    <property type="entry name" value="NR_DBD_HNF4A"/>
    <property type="match status" value="1"/>
</dbReference>
<dbReference type="Gene3D" id="3.30.50.10">
    <property type="entry name" value="Erythroid Transcription Factor GATA-1, subunit A"/>
    <property type="match status" value="1"/>
</dbReference>
<dbReference type="Gene3D" id="1.10.565.10">
    <property type="entry name" value="Retinoid X Receptor"/>
    <property type="match status" value="1"/>
</dbReference>
<dbReference type="InterPro" id="IPR051152">
    <property type="entry name" value="C.elegans_Orphan_NR"/>
</dbReference>
<dbReference type="InterPro" id="IPR049636">
    <property type="entry name" value="HNF4-like_DBD"/>
</dbReference>
<dbReference type="InterPro" id="IPR035500">
    <property type="entry name" value="NHR-like_dom_sf"/>
</dbReference>
<dbReference type="InterPro" id="IPR000536">
    <property type="entry name" value="Nucl_hrmn_rcpt_lig-bd"/>
</dbReference>
<dbReference type="InterPro" id="IPR001628">
    <property type="entry name" value="Znf_hrmn_rcpt"/>
</dbReference>
<dbReference type="InterPro" id="IPR013088">
    <property type="entry name" value="Znf_NHR/GATA"/>
</dbReference>
<dbReference type="PANTHER" id="PTHR45680">
    <property type="entry name" value="NUCLEAR HORMONE RECEPTOR FAMILY"/>
    <property type="match status" value="1"/>
</dbReference>
<dbReference type="PANTHER" id="PTHR45680:SF28">
    <property type="entry name" value="NUCLEAR HORMONE RECEPTOR FAMILY-RELATED"/>
    <property type="match status" value="1"/>
</dbReference>
<dbReference type="Pfam" id="PF00104">
    <property type="entry name" value="Hormone_recep"/>
    <property type="match status" value="1"/>
</dbReference>
<dbReference type="Pfam" id="PF00105">
    <property type="entry name" value="zf-C4"/>
    <property type="match status" value="1"/>
</dbReference>
<dbReference type="PRINTS" id="PR00047">
    <property type="entry name" value="STROIDFINGER"/>
</dbReference>
<dbReference type="SMART" id="SM00430">
    <property type="entry name" value="HOLI"/>
    <property type="match status" value="1"/>
</dbReference>
<dbReference type="SMART" id="SM00399">
    <property type="entry name" value="ZnF_C4"/>
    <property type="match status" value="1"/>
</dbReference>
<dbReference type="SUPFAM" id="SSF57716">
    <property type="entry name" value="Glucocorticoid receptor-like (DNA-binding domain)"/>
    <property type="match status" value="1"/>
</dbReference>
<dbReference type="SUPFAM" id="SSF48508">
    <property type="entry name" value="Nuclear receptor ligand-binding domain"/>
    <property type="match status" value="1"/>
</dbReference>
<dbReference type="PROSITE" id="PS51843">
    <property type="entry name" value="NR_LBD"/>
    <property type="match status" value="1"/>
</dbReference>
<dbReference type="PROSITE" id="PS00031">
    <property type="entry name" value="NUCLEAR_REC_DBD_1"/>
    <property type="match status" value="1"/>
</dbReference>
<dbReference type="PROSITE" id="PS51030">
    <property type="entry name" value="NUCLEAR_REC_DBD_2"/>
    <property type="match status" value="1"/>
</dbReference>
<evidence type="ECO:0000255" key="1">
    <source>
        <dbReference type="PROSITE-ProRule" id="PRU00407"/>
    </source>
</evidence>
<evidence type="ECO:0000255" key="2">
    <source>
        <dbReference type="PROSITE-ProRule" id="PRU01189"/>
    </source>
</evidence>
<evidence type="ECO:0000305" key="3"/>
<reference key="1">
    <citation type="journal article" date="1998" name="Science">
        <title>Genome sequence of the nematode C. elegans: a platform for investigating biology.</title>
        <authorList>
            <consortium name="The C. elegans sequencing consortium"/>
        </authorList>
    </citation>
    <scope>NUCLEOTIDE SEQUENCE [LARGE SCALE GENOMIC DNA]</scope>
    <source>
        <strain>Bristol N2</strain>
    </source>
</reference>
<name>NH134_CAEEL</name>
<keyword id="KW-0238">DNA-binding</keyword>
<keyword id="KW-0479">Metal-binding</keyword>
<keyword id="KW-0539">Nucleus</keyword>
<keyword id="KW-0675">Receptor</keyword>
<keyword id="KW-1185">Reference proteome</keyword>
<keyword id="KW-0804">Transcription</keyword>
<keyword id="KW-0805">Transcription regulation</keyword>
<keyword id="KW-0862">Zinc</keyword>
<keyword id="KW-0863">Zinc-finger</keyword>
<proteinExistence type="inferred from homology"/>